<proteinExistence type="inferred from homology"/>
<sequence length="158" mass="18211">MPRERGEKVVATNRKARHDYTIESTYEAGLVLTGTEVKSLRQGRASLVDGYAFVDAGEAWLDAVHIPEYNQGTWNNHPVRRKRKLLLHKEQILKIHSKVKEGGYTVVPLQLYFVDGRAKVELAIAKGKKEYDKRQTLRERQDKREADRAMSSHRRLGE</sequence>
<organism>
    <name type="scientific">Clavibacter michiganensis subsp. michiganensis (strain NCPPB 382)</name>
    <dbReference type="NCBI Taxonomy" id="443906"/>
    <lineage>
        <taxon>Bacteria</taxon>
        <taxon>Bacillati</taxon>
        <taxon>Actinomycetota</taxon>
        <taxon>Actinomycetes</taxon>
        <taxon>Micrococcales</taxon>
        <taxon>Microbacteriaceae</taxon>
        <taxon>Clavibacter</taxon>
    </lineage>
</organism>
<evidence type="ECO:0000255" key="1">
    <source>
        <dbReference type="HAMAP-Rule" id="MF_00023"/>
    </source>
</evidence>
<evidence type="ECO:0000256" key="2">
    <source>
        <dbReference type="SAM" id="MobiDB-lite"/>
    </source>
</evidence>
<name>SSRP_CLAM3</name>
<protein>
    <recommendedName>
        <fullName evidence="1">SsrA-binding protein</fullName>
    </recommendedName>
    <alternativeName>
        <fullName evidence="1">Small protein B</fullName>
    </alternativeName>
</protein>
<gene>
    <name evidence="1" type="primary">smpB</name>
    <name type="ordered locus">CMM_1311</name>
</gene>
<comment type="function">
    <text evidence="1">Required for rescue of stalled ribosomes mediated by trans-translation. Binds to transfer-messenger RNA (tmRNA), required for stable association of tmRNA with ribosomes. tmRNA and SmpB together mimic tRNA shape, replacing the anticodon stem-loop with SmpB. tmRNA is encoded by the ssrA gene; the 2 termini fold to resemble tRNA(Ala) and it encodes a 'tag peptide', a short internal open reading frame. During trans-translation Ala-aminoacylated tmRNA acts like a tRNA, entering the A-site of stalled ribosomes, displacing the stalled mRNA. The ribosome then switches to translate the ORF on the tmRNA; the nascent peptide is terminated with the 'tag peptide' encoded by the tmRNA and targeted for degradation. The ribosome is freed to recommence translation, which seems to be the essential function of trans-translation.</text>
</comment>
<comment type="subcellular location">
    <subcellularLocation>
        <location evidence="1">Cytoplasm</location>
    </subcellularLocation>
    <text evidence="1">The tmRNA-SmpB complex associates with stalled 70S ribosomes.</text>
</comment>
<comment type="similarity">
    <text evidence="1">Belongs to the SmpB family.</text>
</comment>
<dbReference type="EMBL" id="AM711867">
    <property type="protein sequence ID" value="CAN01356.1"/>
    <property type="molecule type" value="Genomic_DNA"/>
</dbReference>
<dbReference type="RefSeq" id="WP_012037997.1">
    <property type="nucleotide sequence ID" value="NC_009480.1"/>
</dbReference>
<dbReference type="SMR" id="A5CQK2"/>
<dbReference type="GeneID" id="92947281"/>
<dbReference type="KEGG" id="cmi:CMM_1311"/>
<dbReference type="eggNOG" id="COG0691">
    <property type="taxonomic scope" value="Bacteria"/>
</dbReference>
<dbReference type="HOGENOM" id="CLU_108953_2_1_11"/>
<dbReference type="OrthoDB" id="9805462at2"/>
<dbReference type="Proteomes" id="UP000001564">
    <property type="component" value="Chromosome"/>
</dbReference>
<dbReference type="GO" id="GO:0005829">
    <property type="term" value="C:cytosol"/>
    <property type="evidence" value="ECO:0007669"/>
    <property type="project" value="TreeGrafter"/>
</dbReference>
<dbReference type="GO" id="GO:0003723">
    <property type="term" value="F:RNA binding"/>
    <property type="evidence" value="ECO:0007669"/>
    <property type="project" value="UniProtKB-UniRule"/>
</dbReference>
<dbReference type="GO" id="GO:0070929">
    <property type="term" value="P:trans-translation"/>
    <property type="evidence" value="ECO:0007669"/>
    <property type="project" value="UniProtKB-UniRule"/>
</dbReference>
<dbReference type="CDD" id="cd09294">
    <property type="entry name" value="SmpB"/>
    <property type="match status" value="1"/>
</dbReference>
<dbReference type="Gene3D" id="2.40.280.10">
    <property type="match status" value="1"/>
</dbReference>
<dbReference type="HAMAP" id="MF_00023">
    <property type="entry name" value="SmpB"/>
    <property type="match status" value="1"/>
</dbReference>
<dbReference type="InterPro" id="IPR023620">
    <property type="entry name" value="SmpB"/>
</dbReference>
<dbReference type="InterPro" id="IPR000037">
    <property type="entry name" value="SsrA-bd_prot"/>
</dbReference>
<dbReference type="InterPro" id="IPR020081">
    <property type="entry name" value="SsrA-bd_prot_CS"/>
</dbReference>
<dbReference type="NCBIfam" id="NF003843">
    <property type="entry name" value="PRK05422.1"/>
    <property type="match status" value="1"/>
</dbReference>
<dbReference type="NCBIfam" id="TIGR00086">
    <property type="entry name" value="smpB"/>
    <property type="match status" value="1"/>
</dbReference>
<dbReference type="PANTHER" id="PTHR30308:SF2">
    <property type="entry name" value="SSRA-BINDING PROTEIN"/>
    <property type="match status" value="1"/>
</dbReference>
<dbReference type="PANTHER" id="PTHR30308">
    <property type="entry name" value="TMRNA-BINDING COMPONENT OF TRANS-TRANSLATION TAGGING COMPLEX"/>
    <property type="match status" value="1"/>
</dbReference>
<dbReference type="Pfam" id="PF01668">
    <property type="entry name" value="SmpB"/>
    <property type="match status" value="1"/>
</dbReference>
<dbReference type="SUPFAM" id="SSF74982">
    <property type="entry name" value="Small protein B (SmpB)"/>
    <property type="match status" value="1"/>
</dbReference>
<dbReference type="PROSITE" id="PS01317">
    <property type="entry name" value="SSRP"/>
    <property type="match status" value="1"/>
</dbReference>
<keyword id="KW-0963">Cytoplasm</keyword>
<keyword id="KW-0694">RNA-binding</keyword>
<reference key="1">
    <citation type="journal article" date="2008" name="J. Bacteriol.">
        <title>The genome sequence of the tomato-pathogenic actinomycete Clavibacter michiganensis subsp. michiganensis NCPPB382 reveals a large island involved in pathogenicity.</title>
        <authorList>
            <person name="Gartemann K.-H."/>
            <person name="Abt B."/>
            <person name="Bekel T."/>
            <person name="Burger A."/>
            <person name="Engemann J."/>
            <person name="Fluegel M."/>
            <person name="Gaigalat L."/>
            <person name="Goesmann A."/>
            <person name="Graefen I."/>
            <person name="Kalinowski J."/>
            <person name="Kaup O."/>
            <person name="Kirchner O."/>
            <person name="Krause L."/>
            <person name="Linke B."/>
            <person name="McHardy A."/>
            <person name="Meyer F."/>
            <person name="Pohle S."/>
            <person name="Rueckert C."/>
            <person name="Schneiker S."/>
            <person name="Zellermann E.-M."/>
            <person name="Puehler A."/>
            <person name="Eichenlaub R."/>
            <person name="Kaiser O."/>
            <person name="Bartels D."/>
        </authorList>
    </citation>
    <scope>NUCLEOTIDE SEQUENCE [LARGE SCALE GENOMIC DNA]</scope>
    <source>
        <strain>NCPPB 382</strain>
    </source>
</reference>
<accession>A5CQK2</accession>
<feature type="chain" id="PRO_1000002033" description="SsrA-binding protein">
    <location>
        <begin position="1"/>
        <end position="158"/>
    </location>
</feature>
<feature type="region of interest" description="Disordered" evidence="2">
    <location>
        <begin position="131"/>
        <end position="158"/>
    </location>
</feature>